<organism>
    <name type="scientific">Rhodococcus jostii (strain RHA1)</name>
    <dbReference type="NCBI Taxonomy" id="101510"/>
    <lineage>
        <taxon>Bacteria</taxon>
        <taxon>Bacillati</taxon>
        <taxon>Actinomycetota</taxon>
        <taxon>Actinomycetes</taxon>
        <taxon>Mycobacteriales</taxon>
        <taxon>Nocardiaceae</taxon>
        <taxon>Rhodococcus</taxon>
    </lineage>
</organism>
<accession>Q0SAK3</accession>
<name>Y3630_RHOJR</name>
<protein>
    <recommendedName>
        <fullName evidence="1">UPF0301 protein RHA1_ro03630</fullName>
    </recommendedName>
</protein>
<evidence type="ECO:0000255" key="1">
    <source>
        <dbReference type="HAMAP-Rule" id="MF_00758"/>
    </source>
</evidence>
<gene>
    <name type="ordered locus">RHA1_ro03630</name>
</gene>
<proteinExistence type="inferred from homology"/>
<dbReference type="EMBL" id="CP000431">
    <property type="protein sequence ID" value="ABG95433.1"/>
    <property type="molecule type" value="Genomic_DNA"/>
</dbReference>
<dbReference type="RefSeq" id="WP_009476712.1">
    <property type="nucleotide sequence ID" value="NC_008268.1"/>
</dbReference>
<dbReference type="SMR" id="Q0SAK3"/>
<dbReference type="KEGG" id="rha:RHA1_ro03630"/>
<dbReference type="eggNOG" id="COG1678">
    <property type="taxonomic scope" value="Bacteria"/>
</dbReference>
<dbReference type="HOGENOM" id="CLU_057596_2_0_11"/>
<dbReference type="OrthoDB" id="9807486at2"/>
<dbReference type="Proteomes" id="UP000008710">
    <property type="component" value="Chromosome"/>
</dbReference>
<dbReference type="GO" id="GO:0005829">
    <property type="term" value="C:cytosol"/>
    <property type="evidence" value="ECO:0007669"/>
    <property type="project" value="TreeGrafter"/>
</dbReference>
<dbReference type="Gene3D" id="3.40.1740.10">
    <property type="entry name" value="VC0467-like"/>
    <property type="match status" value="1"/>
</dbReference>
<dbReference type="HAMAP" id="MF_00758">
    <property type="entry name" value="UPF0301"/>
    <property type="match status" value="1"/>
</dbReference>
<dbReference type="InterPro" id="IPR003774">
    <property type="entry name" value="AlgH-like"/>
</dbReference>
<dbReference type="NCBIfam" id="NF001269">
    <property type="entry name" value="PRK00228.2-1"/>
    <property type="match status" value="1"/>
</dbReference>
<dbReference type="NCBIfam" id="NF001272">
    <property type="entry name" value="PRK00228.2-4"/>
    <property type="match status" value="1"/>
</dbReference>
<dbReference type="PANTHER" id="PTHR30327">
    <property type="entry name" value="UNCHARACTERIZED PROTEIN YQGE"/>
    <property type="match status" value="1"/>
</dbReference>
<dbReference type="PANTHER" id="PTHR30327:SF1">
    <property type="entry name" value="UPF0301 PROTEIN YQGE"/>
    <property type="match status" value="1"/>
</dbReference>
<dbReference type="Pfam" id="PF02622">
    <property type="entry name" value="DUF179"/>
    <property type="match status" value="1"/>
</dbReference>
<dbReference type="SUPFAM" id="SSF143456">
    <property type="entry name" value="VC0467-like"/>
    <property type="match status" value="1"/>
</dbReference>
<reference key="1">
    <citation type="journal article" date="2006" name="Proc. Natl. Acad. Sci. U.S.A.">
        <title>The complete genome of Rhodococcus sp. RHA1 provides insights into a catabolic powerhouse.</title>
        <authorList>
            <person name="McLeod M.P."/>
            <person name="Warren R.L."/>
            <person name="Hsiao W.W.L."/>
            <person name="Araki N."/>
            <person name="Myhre M."/>
            <person name="Fernandes C."/>
            <person name="Miyazawa D."/>
            <person name="Wong W."/>
            <person name="Lillquist A.L."/>
            <person name="Wang D."/>
            <person name="Dosanjh M."/>
            <person name="Hara H."/>
            <person name="Petrescu A."/>
            <person name="Morin R.D."/>
            <person name="Yang G."/>
            <person name="Stott J.M."/>
            <person name="Schein J.E."/>
            <person name="Shin H."/>
            <person name="Smailus D."/>
            <person name="Siddiqui A.S."/>
            <person name="Marra M.A."/>
            <person name="Jones S.J.M."/>
            <person name="Holt R."/>
            <person name="Brinkman F.S.L."/>
            <person name="Miyauchi K."/>
            <person name="Fukuda M."/>
            <person name="Davies J.E."/>
            <person name="Mohn W.W."/>
            <person name="Eltis L.D."/>
        </authorList>
    </citation>
    <scope>NUCLEOTIDE SEQUENCE [LARGE SCALE GENOMIC DNA]</scope>
    <source>
        <strain>RHA1</strain>
    </source>
</reference>
<comment type="similarity">
    <text evidence="1">Belongs to the UPF0301 (AlgH) family.</text>
</comment>
<feature type="chain" id="PRO_0000258867" description="UPF0301 protein RHA1_ro03630">
    <location>
        <begin position="1"/>
        <end position="201"/>
    </location>
</feature>
<sequence length="201" mass="21691">MAHAEEPEDRTASTEPVVRPGSLLVSSTDLVEPAFRRTVIYVIEHNDAGSLGVVINRPSETAVHDVLPQWAPLAARPSALYVGGPVKRDAALCLATLRTGAQADGVAGLRRVHGRVVMVDLDSDPEVIAPLVEGVRIFAGYSGWTYGQLDSELQRDDWIVISALASDVVAPARVDVWAQVLRRQPLPLALLATHPIDVERN</sequence>